<organism>
    <name type="scientific">Treponema pallidum (strain Nichols)</name>
    <dbReference type="NCBI Taxonomy" id="243276"/>
    <lineage>
        <taxon>Bacteria</taxon>
        <taxon>Pseudomonadati</taxon>
        <taxon>Spirochaetota</taxon>
        <taxon>Spirochaetia</taxon>
        <taxon>Spirochaetales</taxon>
        <taxon>Treponemataceae</taxon>
        <taxon>Treponema</taxon>
    </lineage>
</organism>
<keyword id="KW-0238">DNA-binding</keyword>
<keyword id="KW-0413">Isomerase</keyword>
<keyword id="KW-0460">Magnesium</keyword>
<keyword id="KW-0479">Metal-binding</keyword>
<keyword id="KW-1185">Reference proteome</keyword>
<keyword id="KW-0677">Repeat</keyword>
<keyword id="KW-0799">Topoisomerase</keyword>
<keyword id="KW-0862">Zinc</keyword>
<keyword id="KW-0863">Zinc-finger</keyword>
<feature type="chain" id="PRO_0000145170" description="DNA topoisomerase 1">
    <location>
        <begin position="1"/>
        <end position="731"/>
    </location>
</feature>
<feature type="domain" description="Toprim" evidence="1">
    <location>
        <begin position="17"/>
        <end position="130"/>
    </location>
</feature>
<feature type="domain" description="Topo IA-type catalytic" evidence="2">
    <location>
        <begin position="144"/>
        <end position="569"/>
    </location>
</feature>
<feature type="zinc finger region" description="C4-type 1">
    <location>
        <begin position="591"/>
        <end position="617"/>
    </location>
</feature>
<feature type="zinc finger region" description="C4-type 2">
    <location>
        <begin position="628"/>
        <end position="657"/>
    </location>
</feature>
<feature type="zinc finger region" description="C4-type 3">
    <location>
        <begin position="670"/>
        <end position="696"/>
    </location>
</feature>
<feature type="region of interest" description="Interaction with DNA" evidence="1">
    <location>
        <begin position="178"/>
        <end position="183"/>
    </location>
</feature>
<feature type="active site" description="O-(5'-phospho-DNA)-tyrosine intermediate" evidence="2">
    <location>
        <position position="312"/>
    </location>
</feature>
<feature type="binding site" evidence="1">
    <location>
        <position position="23"/>
    </location>
    <ligand>
        <name>Mg(2+)</name>
        <dbReference type="ChEBI" id="CHEBI:18420"/>
        <note>catalytic</note>
    </ligand>
</feature>
<feature type="binding site" evidence="1">
    <location>
        <position position="96"/>
    </location>
    <ligand>
        <name>Mg(2+)</name>
        <dbReference type="ChEBI" id="CHEBI:18420"/>
        <note>catalytic</note>
    </ligand>
</feature>
<feature type="site" description="Interaction with DNA" evidence="1">
    <location>
        <position position="47"/>
    </location>
</feature>
<feature type="site" description="Interaction with DNA" evidence="1">
    <location>
        <position position="154"/>
    </location>
</feature>
<feature type="site" description="Interaction with DNA" evidence="1">
    <location>
        <position position="155"/>
    </location>
</feature>
<feature type="site" description="Interaction with DNA" evidence="1">
    <location>
        <position position="158"/>
    </location>
</feature>
<feature type="site" description="Interaction with DNA" evidence="1">
    <location>
        <position position="163"/>
    </location>
</feature>
<feature type="site" description="Interaction with DNA" evidence="1">
    <location>
        <position position="170"/>
    </location>
</feature>
<feature type="site" description="Interaction with DNA" evidence="1">
    <location>
        <position position="314"/>
    </location>
</feature>
<feature type="site" description="Interaction with DNA" evidence="1">
    <location>
        <position position="501"/>
    </location>
</feature>
<reference key="1">
    <citation type="journal article" date="1998" name="Science">
        <title>Complete genome sequence of Treponema pallidum, the syphilis spirochete.</title>
        <authorList>
            <person name="Fraser C.M."/>
            <person name="Norris S.J."/>
            <person name="Weinstock G.M."/>
            <person name="White O."/>
            <person name="Sutton G.G."/>
            <person name="Dodson R.J."/>
            <person name="Gwinn M.L."/>
            <person name="Hickey E.K."/>
            <person name="Clayton R.A."/>
            <person name="Ketchum K.A."/>
            <person name="Sodergren E."/>
            <person name="Hardham J.M."/>
            <person name="McLeod M.P."/>
            <person name="Salzberg S.L."/>
            <person name="Peterson J.D."/>
            <person name="Khalak H.G."/>
            <person name="Richardson D.L."/>
            <person name="Howell J.K."/>
            <person name="Chidambaram M."/>
            <person name="Utterback T.R."/>
            <person name="McDonald L.A."/>
            <person name="Artiach P."/>
            <person name="Bowman C."/>
            <person name="Cotton M.D."/>
            <person name="Fujii C."/>
            <person name="Garland S.A."/>
            <person name="Hatch B."/>
            <person name="Horst K."/>
            <person name="Roberts K.M."/>
            <person name="Sandusky M."/>
            <person name="Weidman J.F."/>
            <person name="Smith H.O."/>
            <person name="Venter J.C."/>
        </authorList>
    </citation>
    <scope>NUCLEOTIDE SEQUENCE [LARGE SCALE GENOMIC DNA]</scope>
    <source>
        <strain>Nichols</strain>
    </source>
</reference>
<gene>
    <name evidence="1" type="primary">topA</name>
    <name type="ordered locus">TP_0394</name>
</gene>
<proteinExistence type="inferred from homology"/>
<accession>O83409</accession>
<name>TOP1_TREPA</name>
<dbReference type="EC" id="5.6.2.1" evidence="1"/>
<dbReference type="EMBL" id="AE000520">
    <property type="protein sequence ID" value="AAC65378.1"/>
    <property type="molecule type" value="Genomic_DNA"/>
</dbReference>
<dbReference type="PIR" id="D71332">
    <property type="entry name" value="D71332"/>
</dbReference>
<dbReference type="RefSeq" id="WP_010881842.1">
    <property type="nucleotide sequence ID" value="NC_021490.2"/>
</dbReference>
<dbReference type="SMR" id="O83409"/>
<dbReference type="IntAct" id="O83409">
    <property type="interactions" value="2"/>
</dbReference>
<dbReference type="STRING" id="243276.TP_0394"/>
<dbReference type="EnsemblBacteria" id="AAC65378">
    <property type="protein sequence ID" value="AAC65378"/>
    <property type="gene ID" value="TP_0394"/>
</dbReference>
<dbReference type="GeneID" id="93876168"/>
<dbReference type="KEGG" id="tpa:TP_0394"/>
<dbReference type="KEGG" id="tpw:TPANIC_0394"/>
<dbReference type="eggNOG" id="COG0550">
    <property type="taxonomic scope" value="Bacteria"/>
</dbReference>
<dbReference type="eggNOG" id="COG0551">
    <property type="taxonomic scope" value="Bacteria"/>
</dbReference>
<dbReference type="HOGENOM" id="CLU_002929_4_3_12"/>
<dbReference type="OrthoDB" id="9804262at2"/>
<dbReference type="Proteomes" id="UP000000811">
    <property type="component" value="Chromosome"/>
</dbReference>
<dbReference type="GO" id="GO:0005694">
    <property type="term" value="C:chromosome"/>
    <property type="evidence" value="ECO:0007669"/>
    <property type="project" value="InterPro"/>
</dbReference>
<dbReference type="GO" id="GO:0003677">
    <property type="term" value="F:DNA binding"/>
    <property type="evidence" value="ECO:0007669"/>
    <property type="project" value="UniProtKB-KW"/>
</dbReference>
<dbReference type="GO" id="GO:0003917">
    <property type="term" value="F:DNA topoisomerase type I (single strand cut, ATP-independent) activity"/>
    <property type="evidence" value="ECO:0007669"/>
    <property type="project" value="UniProtKB-UniRule"/>
</dbReference>
<dbReference type="GO" id="GO:0008270">
    <property type="term" value="F:zinc ion binding"/>
    <property type="evidence" value="ECO:0007669"/>
    <property type="project" value="UniProtKB-KW"/>
</dbReference>
<dbReference type="GO" id="GO:0006265">
    <property type="term" value="P:DNA topological change"/>
    <property type="evidence" value="ECO:0007669"/>
    <property type="project" value="UniProtKB-UniRule"/>
</dbReference>
<dbReference type="CDD" id="cd00186">
    <property type="entry name" value="TOP1Ac"/>
    <property type="match status" value="1"/>
</dbReference>
<dbReference type="CDD" id="cd03363">
    <property type="entry name" value="TOPRIM_TopoIA_TopoI"/>
    <property type="match status" value="1"/>
</dbReference>
<dbReference type="Gene3D" id="3.40.50.140">
    <property type="match status" value="1"/>
</dbReference>
<dbReference type="Gene3D" id="3.30.65.10">
    <property type="entry name" value="Bacterial Topoisomerase I, domain 1"/>
    <property type="match status" value="1"/>
</dbReference>
<dbReference type="Gene3D" id="1.10.460.10">
    <property type="entry name" value="Topoisomerase I, domain 2"/>
    <property type="match status" value="1"/>
</dbReference>
<dbReference type="Gene3D" id="2.70.20.10">
    <property type="entry name" value="Topoisomerase I, domain 3"/>
    <property type="match status" value="1"/>
</dbReference>
<dbReference type="Gene3D" id="1.10.290.10">
    <property type="entry name" value="Topoisomerase I, domain 4"/>
    <property type="match status" value="1"/>
</dbReference>
<dbReference type="HAMAP" id="MF_00952">
    <property type="entry name" value="Topoisom_1_prok"/>
    <property type="match status" value="1"/>
</dbReference>
<dbReference type="InterPro" id="IPR000380">
    <property type="entry name" value="Topo_IA"/>
</dbReference>
<dbReference type="InterPro" id="IPR003601">
    <property type="entry name" value="Topo_IA_2"/>
</dbReference>
<dbReference type="InterPro" id="IPR023406">
    <property type="entry name" value="Topo_IA_AS"/>
</dbReference>
<dbReference type="InterPro" id="IPR013497">
    <property type="entry name" value="Topo_IA_cen"/>
</dbReference>
<dbReference type="InterPro" id="IPR013824">
    <property type="entry name" value="Topo_IA_cen_sub1"/>
</dbReference>
<dbReference type="InterPro" id="IPR013825">
    <property type="entry name" value="Topo_IA_cen_sub2"/>
</dbReference>
<dbReference type="InterPro" id="IPR013826">
    <property type="entry name" value="Topo_IA_cen_sub3"/>
</dbReference>
<dbReference type="InterPro" id="IPR023405">
    <property type="entry name" value="Topo_IA_core_domain"/>
</dbReference>
<dbReference type="InterPro" id="IPR003602">
    <property type="entry name" value="Topo_IA_DNA-bd_dom"/>
</dbReference>
<dbReference type="InterPro" id="IPR013498">
    <property type="entry name" value="Topo_IA_Znf"/>
</dbReference>
<dbReference type="InterPro" id="IPR005733">
    <property type="entry name" value="TopoI_bac-type"/>
</dbReference>
<dbReference type="InterPro" id="IPR028612">
    <property type="entry name" value="Topoisom_1_IA"/>
</dbReference>
<dbReference type="InterPro" id="IPR006171">
    <property type="entry name" value="TOPRIM_dom"/>
</dbReference>
<dbReference type="InterPro" id="IPR034149">
    <property type="entry name" value="TOPRIM_TopoI"/>
</dbReference>
<dbReference type="NCBIfam" id="TIGR01051">
    <property type="entry name" value="topA_bact"/>
    <property type="match status" value="1"/>
</dbReference>
<dbReference type="PANTHER" id="PTHR42785:SF1">
    <property type="entry name" value="DNA TOPOISOMERASE"/>
    <property type="match status" value="1"/>
</dbReference>
<dbReference type="PANTHER" id="PTHR42785">
    <property type="entry name" value="DNA TOPOISOMERASE, TYPE IA, CORE"/>
    <property type="match status" value="1"/>
</dbReference>
<dbReference type="Pfam" id="PF01131">
    <property type="entry name" value="Topoisom_bac"/>
    <property type="match status" value="1"/>
</dbReference>
<dbReference type="Pfam" id="PF01751">
    <property type="entry name" value="Toprim"/>
    <property type="match status" value="1"/>
</dbReference>
<dbReference type="Pfam" id="PF01396">
    <property type="entry name" value="Zn_ribbon_Top1"/>
    <property type="match status" value="3"/>
</dbReference>
<dbReference type="PRINTS" id="PR00417">
    <property type="entry name" value="PRTPISMRASEI"/>
</dbReference>
<dbReference type="SMART" id="SM00437">
    <property type="entry name" value="TOP1Ac"/>
    <property type="match status" value="1"/>
</dbReference>
<dbReference type="SMART" id="SM00436">
    <property type="entry name" value="TOP1Bc"/>
    <property type="match status" value="1"/>
</dbReference>
<dbReference type="SMART" id="SM00493">
    <property type="entry name" value="TOPRIM"/>
    <property type="match status" value="1"/>
</dbReference>
<dbReference type="SUPFAM" id="SSF56712">
    <property type="entry name" value="Prokaryotic type I DNA topoisomerase"/>
    <property type="match status" value="1"/>
</dbReference>
<dbReference type="SUPFAM" id="SSF57783">
    <property type="entry name" value="Zinc beta-ribbon"/>
    <property type="match status" value="1"/>
</dbReference>
<dbReference type="PROSITE" id="PS00396">
    <property type="entry name" value="TOPO_IA_1"/>
    <property type="match status" value="1"/>
</dbReference>
<dbReference type="PROSITE" id="PS52039">
    <property type="entry name" value="TOPO_IA_2"/>
    <property type="match status" value="1"/>
</dbReference>
<dbReference type="PROSITE" id="PS50880">
    <property type="entry name" value="TOPRIM"/>
    <property type="match status" value="1"/>
</dbReference>
<sequence>MEVRGLQPKRQKTFARKHLVIVESPAKAQTIEKYLGTQYVVRASMGHVIDLPKSRLAIDIEHDFQPEYITVRGRAQCLKELRTLSKQSLQVFLASDRDREGEAIAYHLAQSIQAYCDTPIKRIVFNEITPHAIRAAIGHPVPIDTAKVNAQKARRVLDRLVGYHLCPLLWHKVKNGLSAGRVQSVALRLICEREVEVKRFVPEEYWTVEGTFEKDKKSFSALLILIQGKKAVFKSKQEATSAIGLFSQSEARVSQIRSFEKNVRPKQPFTTSTLQQCAANRLGFTSRKTMQVAQQLYEGVSLGTHRVGLITYMRTDSVRVSEAAVKEVRAWIATHFSDALPGTPNRYAAKGKSQDAHEAIRPTYVAHTPERIKAHLTRDQIRLYTLIWERFVASQMTDARVRSLTFEITAGPAVFSATETQVIEQGFYRVLKMLSPKDLSKAVLPPTKEGEVVALHNVQSVQHFTQGPVRYTDASIVKMLEEKGIGRPSTYAPTISVLLDRYYVTRIQKQLMPTPLGKVISDLLTTYFHDVVDVSFTARMESKLDEVEEDKIKWNCVIADFYPAFSEKVSTVMKDLNSMRGVFDEKTDVVCSQCGDTMVKKLGRFGFFLACGKFPECRNTQPVPLAKCPRPACDGNIVGKKTRGRKEFYGCTRFPVCDFVTHFKPTFAVCPQCRCFLVEKSNRRVGTYTACVNPECRYVSPTRKNLSLGKEAVLDGSHRGAQDKGAVQHYE</sequence>
<protein>
    <recommendedName>
        <fullName evidence="1">DNA topoisomerase 1</fullName>
        <ecNumber evidence="1">5.6.2.1</ecNumber>
    </recommendedName>
    <alternativeName>
        <fullName evidence="1">DNA topoisomerase I</fullName>
    </alternativeName>
    <alternativeName>
        <fullName>Omega-protein</fullName>
    </alternativeName>
    <alternativeName>
        <fullName>Relaxing enzyme</fullName>
    </alternativeName>
    <alternativeName>
        <fullName>Swivelase</fullName>
    </alternativeName>
    <alternativeName>
        <fullName>Untwisting enzyme</fullName>
    </alternativeName>
</protein>
<comment type="function">
    <text evidence="1">Releases the supercoiling and torsional tension of DNA, which is introduced during the DNA replication and transcription, by transiently cleaving and rejoining one strand of the DNA duplex. Introduces a single-strand break via transesterification at a target site in duplex DNA. The scissile phosphodiester is attacked by the catalytic tyrosine of the enzyme, resulting in the formation of a DNA-(5'-phosphotyrosyl)-enzyme intermediate and the expulsion of a 3'-OH DNA strand. The free DNA strand then undergoes passage around the unbroken strand, thus removing DNA supercoils. Finally, in the religation step, the DNA 3'-OH attacks the covalent intermediate to expel the active-site tyrosine and restore the DNA phosphodiester backbone.</text>
</comment>
<comment type="catalytic activity">
    <reaction evidence="1">
        <text>ATP-independent breakage of single-stranded DNA, followed by passage and rejoining.</text>
        <dbReference type="EC" id="5.6.2.1"/>
    </reaction>
</comment>
<comment type="cofactor">
    <cofactor evidence="1">
        <name>Mg(2+)</name>
        <dbReference type="ChEBI" id="CHEBI:18420"/>
    </cofactor>
</comment>
<comment type="subunit">
    <text evidence="1">Monomer.</text>
</comment>
<comment type="similarity">
    <text evidence="1">Belongs to the type IA topoisomerase family.</text>
</comment>
<evidence type="ECO:0000255" key="1">
    <source>
        <dbReference type="HAMAP-Rule" id="MF_00952"/>
    </source>
</evidence>
<evidence type="ECO:0000255" key="2">
    <source>
        <dbReference type="PROSITE-ProRule" id="PRU01383"/>
    </source>
</evidence>